<proteinExistence type="inferred from homology"/>
<dbReference type="EMBL" id="CP000447">
    <property type="protein sequence ID" value="ABI70500.1"/>
    <property type="molecule type" value="Genomic_DNA"/>
</dbReference>
<dbReference type="RefSeq" id="WP_011636127.1">
    <property type="nucleotide sequence ID" value="NC_008345.1"/>
</dbReference>
<dbReference type="SMR" id="Q087R5"/>
<dbReference type="STRING" id="318167.Sfri_0640"/>
<dbReference type="KEGG" id="sfr:Sfri_0640"/>
<dbReference type="eggNOG" id="COG1438">
    <property type="taxonomic scope" value="Bacteria"/>
</dbReference>
<dbReference type="HOGENOM" id="CLU_097103_2_0_6"/>
<dbReference type="OrthoDB" id="7060358at2"/>
<dbReference type="UniPathway" id="UPA00068"/>
<dbReference type="Proteomes" id="UP000000684">
    <property type="component" value="Chromosome"/>
</dbReference>
<dbReference type="GO" id="GO:0005737">
    <property type="term" value="C:cytoplasm"/>
    <property type="evidence" value="ECO:0007669"/>
    <property type="project" value="UniProtKB-SubCell"/>
</dbReference>
<dbReference type="GO" id="GO:0034618">
    <property type="term" value="F:arginine binding"/>
    <property type="evidence" value="ECO:0007669"/>
    <property type="project" value="InterPro"/>
</dbReference>
<dbReference type="GO" id="GO:0003677">
    <property type="term" value="F:DNA binding"/>
    <property type="evidence" value="ECO:0007669"/>
    <property type="project" value="UniProtKB-KW"/>
</dbReference>
<dbReference type="GO" id="GO:0003700">
    <property type="term" value="F:DNA-binding transcription factor activity"/>
    <property type="evidence" value="ECO:0007669"/>
    <property type="project" value="UniProtKB-UniRule"/>
</dbReference>
<dbReference type="GO" id="GO:0006526">
    <property type="term" value="P:L-arginine biosynthetic process"/>
    <property type="evidence" value="ECO:0007669"/>
    <property type="project" value="UniProtKB-UniPathway"/>
</dbReference>
<dbReference type="GO" id="GO:0051259">
    <property type="term" value="P:protein complex oligomerization"/>
    <property type="evidence" value="ECO:0007669"/>
    <property type="project" value="InterPro"/>
</dbReference>
<dbReference type="GO" id="GO:1900079">
    <property type="term" value="P:regulation of arginine biosynthetic process"/>
    <property type="evidence" value="ECO:0007669"/>
    <property type="project" value="UniProtKB-UniRule"/>
</dbReference>
<dbReference type="Gene3D" id="3.30.1360.40">
    <property type="match status" value="1"/>
</dbReference>
<dbReference type="Gene3D" id="1.10.10.10">
    <property type="entry name" value="Winged helix-like DNA-binding domain superfamily/Winged helix DNA-binding domain"/>
    <property type="match status" value="1"/>
</dbReference>
<dbReference type="HAMAP" id="MF_00173">
    <property type="entry name" value="Arg_repressor"/>
    <property type="match status" value="1"/>
</dbReference>
<dbReference type="InterPro" id="IPR001669">
    <property type="entry name" value="Arg_repress"/>
</dbReference>
<dbReference type="InterPro" id="IPR020899">
    <property type="entry name" value="Arg_repress_C"/>
</dbReference>
<dbReference type="InterPro" id="IPR036251">
    <property type="entry name" value="Arg_repress_C_sf"/>
</dbReference>
<dbReference type="InterPro" id="IPR020900">
    <property type="entry name" value="Arg_repress_DNA-bd"/>
</dbReference>
<dbReference type="InterPro" id="IPR036388">
    <property type="entry name" value="WH-like_DNA-bd_sf"/>
</dbReference>
<dbReference type="InterPro" id="IPR036390">
    <property type="entry name" value="WH_DNA-bd_sf"/>
</dbReference>
<dbReference type="NCBIfam" id="TIGR01529">
    <property type="entry name" value="argR_whole"/>
    <property type="match status" value="1"/>
</dbReference>
<dbReference type="NCBIfam" id="NF003457">
    <property type="entry name" value="PRK05066.1"/>
    <property type="match status" value="1"/>
</dbReference>
<dbReference type="PANTHER" id="PTHR34471">
    <property type="entry name" value="ARGININE REPRESSOR"/>
    <property type="match status" value="1"/>
</dbReference>
<dbReference type="PANTHER" id="PTHR34471:SF1">
    <property type="entry name" value="ARGININE REPRESSOR"/>
    <property type="match status" value="1"/>
</dbReference>
<dbReference type="Pfam" id="PF01316">
    <property type="entry name" value="Arg_repressor"/>
    <property type="match status" value="1"/>
</dbReference>
<dbReference type="Pfam" id="PF02863">
    <property type="entry name" value="Arg_repressor_C"/>
    <property type="match status" value="1"/>
</dbReference>
<dbReference type="PRINTS" id="PR01467">
    <property type="entry name" value="ARGREPRESSOR"/>
</dbReference>
<dbReference type="SUPFAM" id="SSF55252">
    <property type="entry name" value="C-terminal domain of arginine repressor"/>
    <property type="match status" value="1"/>
</dbReference>
<dbReference type="SUPFAM" id="SSF46785">
    <property type="entry name" value="Winged helix' DNA-binding domain"/>
    <property type="match status" value="1"/>
</dbReference>
<comment type="function">
    <text evidence="1">Regulates arginine biosynthesis genes.</text>
</comment>
<comment type="pathway">
    <text>Amino-acid biosynthesis; L-arginine biosynthesis [regulation].</text>
</comment>
<comment type="subcellular location">
    <subcellularLocation>
        <location evidence="1">Cytoplasm</location>
    </subcellularLocation>
</comment>
<comment type="similarity">
    <text evidence="1">Belongs to the ArgR family.</text>
</comment>
<protein>
    <recommendedName>
        <fullName evidence="1">Arginine repressor</fullName>
    </recommendedName>
</protein>
<reference key="1">
    <citation type="submission" date="2006-08" db="EMBL/GenBank/DDBJ databases">
        <title>Complete sequence of Shewanella frigidimarina NCIMB 400.</title>
        <authorList>
            <consortium name="US DOE Joint Genome Institute"/>
            <person name="Copeland A."/>
            <person name="Lucas S."/>
            <person name="Lapidus A."/>
            <person name="Barry K."/>
            <person name="Detter J.C."/>
            <person name="Glavina del Rio T."/>
            <person name="Hammon N."/>
            <person name="Israni S."/>
            <person name="Dalin E."/>
            <person name="Tice H."/>
            <person name="Pitluck S."/>
            <person name="Fredrickson J.K."/>
            <person name="Kolker E."/>
            <person name="McCuel L.A."/>
            <person name="DiChristina T."/>
            <person name="Nealson K.H."/>
            <person name="Newman D."/>
            <person name="Tiedje J.M."/>
            <person name="Zhou J."/>
            <person name="Romine M.F."/>
            <person name="Culley D.E."/>
            <person name="Serres M."/>
            <person name="Chertkov O."/>
            <person name="Brettin T."/>
            <person name="Bruce D."/>
            <person name="Han C."/>
            <person name="Tapia R."/>
            <person name="Gilna P."/>
            <person name="Schmutz J."/>
            <person name="Larimer F."/>
            <person name="Land M."/>
            <person name="Hauser L."/>
            <person name="Kyrpides N."/>
            <person name="Mikhailova N."/>
            <person name="Richardson P."/>
        </authorList>
    </citation>
    <scope>NUCLEOTIDE SEQUENCE [LARGE SCALE GENOMIC DNA]</scope>
    <source>
        <strain>NCIMB 400</strain>
    </source>
</reference>
<evidence type="ECO:0000255" key="1">
    <source>
        <dbReference type="HAMAP-Rule" id="MF_00173"/>
    </source>
</evidence>
<keyword id="KW-0028">Amino-acid biosynthesis</keyword>
<keyword id="KW-0055">Arginine biosynthesis</keyword>
<keyword id="KW-0963">Cytoplasm</keyword>
<keyword id="KW-0238">DNA-binding</keyword>
<keyword id="KW-1185">Reference proteome</keyword>
<keyword id="KW-0678">Repressor</keyword>
<keyword id="KW-0804">Transcription</keyword>
<keyword id="KW-0805">Transcription regulation</keyword>
<feature type="chain" id="PRO_1000023590" description="Arginine repressor">
    <location>
        <begin position="1"/>
        <end position="156"/>
    </location>
</feature>
<sequence length="156" mass="16965">MPATRNQDELVRTFKAILKEERFGSQSEIVNALQAEGFGNINQSKVSRMLSKFGAVRTRNAKQEMVYCLPAELGVPTAGSPVKNLVLDVDHNQAMIVVRTSPGAAQLIARLLDSIGKPEGILGTIAGDDTIFICPASIKTIDETLETVRSLFNYSE</sequence>
<name>ARGR_SHEFN</name>
<gene>
    <name evidence="1" type="primary">argR</name>
    <name type="ordered locus">Sfri_0640</name>
</gene>
<accession>Q087R5</accession>
<organism>
    <name type="scientific">Shewanella frigidimarina (strain NCIMB 400)</name>
    <dbReference type="NCBI Taxonomy" id="318167"/>
    <lineage>
        <taxon>Bacteria</taxon>
        <taxon>Pseudomonadati</taxon>
        <taxon>Pseudomonadota</taxon>
        <taxon>Gammaproteobacteria</taxon>
        <taxon>Alteromonadales</taxon>
        <taxon>Shewanellaceae</taxon>
        <taxon>Shewanella</taxon>
    </lineage>
</organism>